<evidence type="ECO:0000255" key="1">
    <source>
        <dbReference type="HAMAP-Rule" id="MF_00272"/>
    </source>
</evidence>
<evidence type="ECO:0000255" key="2">
    <source>
        <dbReference type="PROSITE-ProRule" id="PRU01066"/>
    </source>
</evidence>
<proteinExistence type="inferred from homology"/>
<accession>Q97Z69</accession>
<comment type="function">
    <text evidence="1">The glycine cleavage system catalyzes the degradation of glycine. The H protein shuttles the methylamine group of glycine from the P protein to the T protein.</text>
</comment>
<comment type="cofactor">
    <cofactor evidence="1">
        <name>(R)-lipoate</name>
        <dbReference type="ChEBI" id="CHEBI:83088"/>
    </cofactor>
    <text evidence="1">Binds 1 lipoyl cofactor covalently.</text>
</comment>
<comment type="subunit">
    <text evidence="1">The glycine cleavage system is composed of four proteins: P, T, L and H.</text>
</comment>
<comment type="similarity">
    <text evidence="1">Belongs to the GcvH family.</text>
</comment>
<reference key="1">
    <citation type="journal article" date="2001" name="Proc. Natl. Acad. Sci. U.S.A.">
        <title>The complete genome of the crenarchaeon Sulfolobus solfataricus P2.</title>
        <authorList>
            <person name="She Q."/>
            <person name="Singh R.K."/>
            <person name="Confalonieri F."/>
            <person name="Zivanovic Y."/>
            <person name="Allard G."/>
            <person name="Awayez M.J."/>
            <person name="Chan-Weiher C.C.-Y."/>
            <person name="Clausen I.G."/>
            <person name="Curtis B.A."/>
            <person name="De Moors A."/>
            <person name="Erauso G."/>
            <person name="Fletcher C."/>
            <person name="Gordon P.M.K."/>
            <person name="Heikamp-de Jong I."/>
            <person name="Jeffries A.C."/>
            <person name="Kozera C.J."/>
            <person name="Medina N."/>
            <person name="Peng X."/>
            <person name="Thi-Ngoc H.P."/>
            <person name="Redder P."/>
            <person name="Schenk M.E."/>
            <person name="Theriault C."/>
            <person name="Tolstrup N."/>
            <person name="Charlebois R.L."/>
            <person name="Doolittle W.F."/>
            <person name="Duguet M."/>
            <person name="Gaasterland T."/>
            <person name="Garrett R.A."/>
            <person name="Ragan M.A."/>
            <person name="Sensen C.W."/>
            <person name="Van der Oost J."/>
        </authorList>
    </citation>
    <scope>NUCLEOTIDE SEQUENCE [LARGE SCALE GENOMIC DNA]</scope>
    <source>
        <strain>ATCC 35092 / DSM 1617 / JCM 11322 / P2</strain>
    </source>
</reference>
<dbReference type="EMBL" id="AE006641">
    <property type="protein sequence ID" value="AAK41324.1"/>
    <property type="molecule type" value="Genomic_DNA"/>
</dbReference>
<dbReference type="PIR" id="E90258">
    <property type="entry name" value="E90258"/>
</dbReference>
<dbReference type="RefSeq" id="WP_009989890.1">
    <property type="nucleotide sequence ID" value="NC_002754.1"/>
</dbReference>
<dbReference type="SMR" id="Q97Z69"/>
<dbReference type="FunCoup" id="Q97Z69">
    <property type="interactions" value="134"/>
</dbReference>
<dbReference type="STRING" id="273057.SSO1061"/>
<dbReference type="PaxDb" id="273057-SSO1061"/>
<dbReference type="EnsemblBacteria" id="AAK41324">
    <property type="protein sequence ID" value="AAK41324"/>
    <property type="gene ID" value="SSO1061"/>
</dbReference>
<dbReference type="KEGG" id="sso:SSO1061"/>
<dbReference type="PATRIC" id="fig|273057.12.peg.1057"/>
<dbReference type="eggNOG" id="arCOG01303">
    <property type="taxonomic scope" value="Archaea"/>
</dbReference>
<dbReference type="HOGENOM" id="CLU_097408_2_2_2"/>
<dbReference type="InParanoid" id="Q97Z69"/>
<dbReference type="PhylomeDB" id="Q97Z69"/>
<dbReference type="Proteomes" id="UP000001974">
    <property type="component" value="Chromosome"/>
</dbReference>
<dbReference type="GO" id="GO:0005960">
    <property type="term" value="C:glycine cleavage complex"/>
    <property type="evidence" value="ECO:0007669"/>
    <property type="project" value="InterPro"/>
</dbReference>
<dbReference type="GO" id="GO:0019464">
    <property type="term" value="P:glycine decarboxylation via glycine cleavage system"/>
    <property type="evidence" value="ECO:0007669"/>
    <property type="project" value="UniProtKB-UniRule"/>
</dbReference>
<dbReference type="CDD" id="cd06848">
    <property type="entry name" value="GCS_H"/>
    <property type="match status" value="1"/>
</dbReference>
<dbReference type="Gene3D" id="2.40.50.100">
    <property type="match status" value="1"/>
</dbReference>
<dbReference type="HAMAP" id="MF_00272">
    <property type="entry name" value="GcvH"/>
    <property type="match status" value="1"/>
</dbReference>
<dbReference type="InterPro" id="IPR003016">
    <property type="entry name" value="2-oxoA_DH_lipoyl-BS"/>
</dbReference>
<dbReference type="InterPro" id="IPR000089">
    <property type="entry name" value="Biotin_lipoyl"/>
</dbReference>
<dbReference type="InterPro" id="IPR002930">
    <property type="entry name" value="GCV_H"/>
</dbReference>
<dbReference type="InterPro" id="IPR033753">
    <property type="entry name" value="GCV_H/Fam206"/>
</dbReference>
<dbReference type="InterPro" id="IPR011053">
    <property type="entry name" value="Single_hybrid_motif"/>
</dbReference>
<dbReference type="NCBIfam" id="NF002270">
    <property type="entry name" value="PRK01202.1"/>
    <property type="match status" value="1"/>
</dbReference>
<dbReference type="PANTHER" id="PTHR11715">
    <property type="entry name" value="GLYCINE CLEAVAGE SYSTEM H PROTEIN"/>
    <property type="match status" value="1"/>
</dbReference>
<dbReference type="PANTHER" id="PTHR11715:SF3">
    <property type="entry name" value="GLYCINE CLEAVAGE SYSTEM H PROTEIN-RELATED"/>
    <property type="match status" value="1"/>
</dbReference>
<dbReference type="Pfam" id="PF01597">
    <property type="entry name" value="GCV_H"/>
    <property type="match status" value="1"/>
</dbReference>
<dbReference type="SUPFAM" id="SSF51230">
    <property type="entry name" value="Single hybrid motif"/>
    <property type="match status" value="1"/>
</dbReference>
<dbReference type="PROSITE" id="PS50968">
    <property type="entry name" value="BIOTINYL_LIPOYL"/>
    <property type="match status" value="1"/>
</dbReference>
<dbReference type="PROSITE" id="PS00189">
    <property type="entry name" value="LIPOYL"/>
    <property type="match status" value="1"/>
</dbReference>
<keyword id="KW-0450">Lipoyl</keyword>
<keyword id="KW-1185">Reference proteome</keyword>
<protein>
    <recommendedName>
        <fullName evidence="1">Probable glycine cleavage system H protein 2</fullName>
    </recommendedName>
</protein>
<sequence length="148" mass="16299">MVVESNCEIPENLYYFIEGKNTVWAKLESPDTIVVGITDLAQTMAGKIVKVRIKKKGTKVEKGRPVATMESGKWAGPVPAPVTGEVVEVNAEAEKSPIIINQDPYGKGWLVKMKMSNPEELKQLFSGQAAIQKLKELIASEKLTCKRL</sequence>
<name>GCSH2_SACS2</name>
<feature type="chain" id="PRO_0000166283" description="Probable glycine cleavage system H protein 2">
    <location>
        <begin position="1"/>
        <end position="148"/>
    </location>
</feature>
<feature type="domain" description="Lipoyl-binding" evidence="2">
    <location>
        <begin position="32"/>
        <end position="114"/>
    </location>
</feature>
<feature type="modified residue" description="N6-lipoyllysine" evidence="1">
    <location>
        <position position="73"/>
    </location>
</feature>
<organism>
    <name type="scientific">Saccharolobus solfataricus (strain ATCC 35092 / DSM 1617 / JCM 11322 / P2)</name>
    <name type="common">Sulfolobus solfataricus</name>
    <dbReference type="NCBI Taxonomy" id="273057"/>
    <lineage>
        <taxon>Archaea</taxon>
        <taxon>Thermoproteota</taxon>
        <taxon>Thermoprotei</taxon>
        <taxon>Sulfolobales</taxon>
        <taxon>Sulfolobaceae</taxon>
        <taxon>Saccharolobus</taxon>
    </lineage>
</organism>
<gene>
    <name evidence="1" type="primary">gcvH2</name>
    <name type="ordered locus">SSO1061</name>
</gene>